<name>MUTL_ECODH</name>
<dbReference type="EMBL" id="CP000948">
    <property type="protein sequence ID" value="ACB05158.1"/>
    <property type="molecule type" value="Genomic_DNA"/>
</dbReference>
<dbReference type="RefSeq" id="WP_001122505.1">
    <property type="nucleotide sequence ID" value="NC_010473.1"/>
</dbReference>
<dbReference type="SMR" id="B1XDS1"/>
<dbReference type="KEGG" id="ecd:ECDH10B_4365"/>
<dbReference type="HOGENOM" id="CLU_004131_5_1_6"/>
<dbReference type="GO" id="GO:0032300">
    <property type="term" value="C:mismatch repair complex"/>
    <property type="evidence" value="ECO:0007669"/>
    <property type="project" value="InterPro"/>
</dbReference>
<dbReference type="GO" id="GO:0005524">
    <property type="term" value="F:ATP binding"/>
    <property type="evidence" value="ECO:0007669"/>
    <property type="project" value="InterPro"/>
</dbReference>
<dbReference type="GO" id="GO:0016887">
    <property type="term" value="F:ATP hydrolysis activity"/>
    <property type="evidence" value="ECO:0007669"/>
    <property type="project" value="InterPro"/>
</dbReference>
<dbReference type="GO" id="GO:0140664">
    <property type="term" value="F:ATP-dependent DNA damage sensor activity"/>
    <property type="evidence" value="ECO:0007669"/>
    <property type="project" value="InterPro"/>
</dbReference>
<dbReference type="GO" id="GO:0030983">
    <property type="term" value="F:mismatched DNA binding"/>
    <property type="evidence" value="ECO:0007669"/>
    <property type="project" value="InterPro"/>
</dbReference>
<dbReference type="GO" id="GO:0006298">
    <property type="term" value="P:mismatch repair"/>
    <property type="evidence" value="ECO:0007669"/>
    <property type="project" value="UniProtKB-UniRule"/>
</dbReference>
<dbReference type="CDD" id="cd16926">
    <property type="entry name" value="HATPase_MutL-MLH-PMS-like"/>
    <property type="match status" value="1"/>
</dbReference>
<dbReference type="CDD" id="cd03482">
    <property type="entry name" value="MutL_Trans_MutL"/>
    <property type="match status" value="1"/>
</dbReference>
<dbReference type="FunFam" id="3.30.230.10:FF:000013">
    <property type="entry name" value="DNA mismatch repair endonuclease MutL"/>
    <property type="match status" value="1"/>
</dbReference>
<dbReference type="FunFam" id="3.30.565.10:FF:000003">
    <property type="entry name" value="DNA mismatch repair endonuclease MutL"/>
    <property type="match status" value="1"/>
</dbReference>
<dbReference type="FunFam" id="3.30.1370.100:FF:000002">
    <property type="entry name" value="DNA mismatch repair protein MutL"/>
    <property type="match status" value="1"/>
</dbReference>
<dbReference type="Gene3D" id="3.30.230.10">
    <property type="match status" value="1"/>
</dbReference>
<dbReference type="Gene3D" id="3.30.565.10">
    <property type="entry name" value="Histidine kinase-like ATPase, C-terminal domain"/>
    <property type="match status" value="1"/>
</dbReference>
<dbReference type="Gene3D" id="3.30.1540.20">
    <property type="entry name" value="MutL, C-terminal domain, dimerisation subdomain"/>
    <property type="match status" value="1"/>
</dbReference>
<dbReference type="Gene3D" id="3.30.1370.100">
    <property type="entry name" value="MutL, C-terminal domain, regulatory subdomain"/>
    <property type="match status" value="1"/>
</dbReference>
<dbReference type="HAMAP" id="MF_00149">
    <property type="entry name" value="DNA_mis_repair"/>
    <property type="match status" value="1"/>
</dbReference>
<dbReference type="InterPro" id="IPR014762">
    <property type="entry name" value="DNA_mismatch_repair_CS"/>
</dbReference>
<dbReference type="InterPro" id="IPR020667">
    <property type="entry name" value="DNA_mismatch_repair_MutL"/>
</dbReference>
<dbReference type="InterPro" id="IPR013507">
    <property type="entry name" value="DNA_mismatch_S5_2-like"/>
</dbReference>
<dbReference type="InterPro" id="IPR036890">
    <property type="entry name" value="HATPase_C_sf"/>
</dbReference>
<dbReference type="InterPro" id="IPR002099">
    <property type="entry name" value="MutL/Mlh/PMS"/>
</dbReference>
<dbReference type="InterPro" id="IPR038973">
    <property type="entry name" value="MutL/Mlh/Pms-like"/>
</dbReference>
<dbReference type="InterPro" id="IPR014790">
    <property type="entry name" value="MutL_C"/>
</dbReference>
<dbReference type="InterPro" id="IPR042120">
    <property type="entry name" value="MutL_C_dimsub"/>
</dbReference>
<dbReference type="InterPro" id="IPR042121">
    <property type="entry name" value="MutL_C_regsub"/>
</dbReference>
<dbReference type="InterPro" id="IPR037198">
    <property type="entry name" value="MutL_C_sf"/>
</dbReference>
<dbReference type="InterPro" id="IPR020568">
    <property type="entry name" value="Ribosomal_Su5_D2-typ_SF"/>
</dbReference>
<dbReference type="InterPro" id="IPR014721">
    <property type="entry name" value="Ribsml_uS5_D2-typ_fold_subgr"/>
</dbReference>
<dbReference type="NCBIfam" id="TIGR00585">
    <property type="entry name" value="mutl"/>
    <property type="match status" value="1"/>
</dbReference>
<dbReference type="NCBIfam" id="NF000948">
    <property type="entry name" value="PRK00095.1-1"/>
    <property type="match status" value="1"/>
</dbReference>
<dbReference type="PANTHER" id="PTHR10073">
    <property type="entry name" value="DNA MISMATCH REPAIR PROTEIN MLH, PMS, MUTL"/>
    <property type="match status" value="1"/>
</dbReference>
<dbReference type="PANTHER" id="PTHR10073:SF12">
    <property type="entry name" value="DNA MISMATCH REPAIR PROTEIN MLH1"/>
    <property type="match status" value="1"/>
</dbReference>
<dbReference type="Pfam" id="PF01119">
    <property type="entry name" value="DNA_mis_repair"/>
    <property type="match status" value="1"/>
</dbReference>
<dbReference type="Pfam" id="PF13589">
    <property type="entry name" value="HATPase_c_3"/>
    <property type="match status" value="1"/>
</dbReference>
<dbReference type="Pfam" id="PF08676">
    <property type="entry name" value="MutL_C"/>
    <property type="match status" value="1"/>
</dbReference>
<dbReference type="SMART" id="SM01340">
    <property type="entry name" value="DNA_mis_repair"/>
    <property type="match status" value="1"/>
</dbReference>
<dbReference type="SMART" id="SM00853">
    <property type="entry name" value="MutL_C"/>
    <property type="match status" value="1"/>
</dbReference>
<dbReference type="SUPFAM" id="SSF55874">
    <property type="entry name" value="ATPase domain of HSP90 chaperone/DNA topoisomerase II/histidine kinase"/>
    <property type="match status" value="1"/>
</dbReference>
<dbReference type="SUPFAM" id="SSF118116">
    <property type="entry name" value="DNA mismatch repair protein MutL"/>
    <property type="match status" value="1"/>
</dbReference>
<dbReference type="SUPFAM" id="SSF54211">
    <property type="entry name" value="Ribosomal protein S5 domain 2-like"/>
    <property type="match status" value="1"/>
</dbReference>
<dbReference type="PROSITE" id="PS00058">
    <property type="entry name" value="DNA_MISMATCH_REPAIR_1"/>
    <property type="match status" value="1"/>
</dbReference>
<gene>
    <name evidence="1" type="primary">mutL</name>
    <name type="ordered locus">ECDH10B_4365</name>
</gene>
<reference key="1">
    <citation type="journal article" date="2008" name="J. Bacteriol.">
        <title>The complete genome sequence of Escherichia coli DH10B: insights into the biology of a laboratory workhorse.</title>
        <authorList>
            <person name="Durfee T."/>
            <person name="Nelson R."/>
            <person name="Baldwin S."/>
            <person name="Plunkett G. III"/>
            <person name="Burland V."/>
            <person name="Mau B."/>
            <person name="Petrosino J.F."/>
            <person name="Qin X."/>
            <person name="Muzny D.M."/>
            <person name="Ayele M."/>
            <person name="Gibbs R.A."/>
            <person name="Csorgo B."/>
            <person name="Posfai G."/>
            <person name="Weinstock G.M."/>
            <person name="Blattner F.R."/>
        </authorList>
    </citation>
    <scope>NUCLEOTIDE SEQUENCE [LARGE SCALE GENOMIC DNA]</scope>
    <source>
        <strain>K12 / DH10B</strain>
    </source>
</reference>
<accession>B1XDS1</accession>
<comment type="function">
    <text evidence="1">This protein is involved in the repair of mismatches in DNA. It is required for dam-dependent methyl-directed DNA mismatch repair. May act as a 'molecular matchmaker', a protein that promotes the formation of a stable complex between two or more DNA-binding proteins in an ATP-dependent manner without itself being part of a final effector complex.</text>
</comment>
<comment type="similarity">
    <text evidence="1">Belongs to the DNA mismatch repair MutL/HexB family.</text>
</comment>
<proteinExistence type="inferred from homology"/>
<evidence type="ECO:0000255" key="1">
    <source>
        <dbReference type="HAMAP-Rule" id="MF_00149"/>
    </source>
</evidence>
<evidence type="ECO:0000256" key="2">
    <source>
        <dbReference type="SAM" id="MobiDB-lite"/>
    </source>
</evidence>
<feature type="chain" id="PRO_1000096649" description="DNA mismatch repair protein MutL">
    <location>
        <begin position="1"/>
        <end position="615"/>
    </location>
</feature>
<feature type="region of interest" description="Disordered" evidence="2">
    <location>
        <begin position="363"/>
        <end position="397"/>
    </location>
</feature>
<feature type="compositionally biased region" description="Low complexity" evidence="2">
    <location>
        <begin position="364"/>
        <end position="391"/>
    </location>
</feature>
<protein>
    <recommendedName>
        <fullName evidence="1">DNA mismatch repair protein MutL</fullName>
    </recommendedName>
</protein>
<organism>
    <name type="scientific">Escherichia coli (strain K12 / DH10B)</name>
    <dbReference type="NCBI Taxonomy" id="316385"/>
    <lineage>
        <taxon>Bacteria</taxon>
        <taxon>Pseudomonadati</taxon>
        <taxon>Pseudomonadota</taxon>
        <taxon>Gammaproteobacteria</taxon>
        <taxon>Enterobacterales</taxon>
        <taxon>Enterobacteriaceae</taxon>
        <taxon>Escherichia</taxon>
    </lineage>
</organism>
<keyword id="KW-0227">DNA damage</keyword>
<keyword id="KW-0234">DNA repair</keyword>
<sequence>MPIQVLPPQLANQIAAGEVVERPASVVKELVENSLDAGATRIDIDIERGGAKLIRIRDNGCGIKKDELALALARHATSKIASLDDLEAIISLGFRGEALASISSVSRLTLTSRTAEQQEAWQAYAEGRDMNVTVKPAAHPVGTTLEVLDLFYNTPARRKFLRTEKTEFNHIDEIIRRIALARFDVTINLSHNGKIVRQYRAVPEGGQKERRLGAICGTAFLEQALAIEWQHGDLTLRGWVADPNHTTPALAEIQYCYVNGRMMRDRLINHAIRQACEDKLGADQQPAFVLYLEIDPHQVDVNVHPAKHEVRFHQSRLVHDFIYQGVLSVLQQQLETPLPLDDEPQPAPRSIPENRVAAGRNHFAEPAAREPVAPRYTPAPASGSRPAAPWPNAQPGYQKQQGEVYRQLLQTPAPMQKLKAPEPQEPALAANSQSFGRVLTIVHSDCALLERDGNISLLSLPVAERWLRQAQLTPGEAPVCAQPLLIPLRLKVSAEEKSALEKAQSALAELGIDFQSDAQHVTIRAVPLPLRQQNLQILIPELIGYLAKQSVFEPGNIAQWIARNLMSEHAQWSMAQAITLLADVERLCPQLVKTPPGGLLQSVDLHPAIKALKDE</sequence>